<dbReference type="EMBL" id="AM286415">
    <property type="protein sequence ID" value="CAL12096.1"/>
    <property type="molecule type" value="Genomic_DNA"/>
</dbReference>
<dbReference type="RefSeq" id="WP_011816298.1">
    <property type="nucleotide sequence ID" value="NC_008800.1"/>
</dbReference>
<dbReference type="RefSeq" id="YP_001006270.1">
    <property type="nucleotide sequence ID" value="NC_008800.1"/>
</dbReference>
<dbReference type="SMR" id="A1JML7"/>
<dbReference type="KEGG" id="yen:YE2018"/>
<dbReference type="PATRIC" id="fig|393305.7.peg.2181"/>
<dbReference type="eggNOG" id="ENOG502Z895">
    <property type="taxonomic scope" value="Bacteria"/>
</dbReference>
<dbReference type="HOGENOM" id="CLU_078181_0_0_6"/>
<dbReference type="OrthoDB" id="6298545at2"/>
<dbReference type="Proteomes" id="UP000000642">
    <property type="component" value="Chromosome"/>
</dbReference>
<dbReference type="GO" id="GO:0005737">
    <property type="term" value="C:cytoplasm"/>
    <property type="evidence" value="ECO:0007669"/>
    <property type="project" value="UniProtKB-SubCell"/>
</dbReference>
<dbReference type="GO" id="GO:0003677">
    <property type="term" value="F:DNA binding"/>
    <property type="evidence" value="ECO:0007669"/>
    <property type="project" value="UniProtKB-UniRule"/>
</dbReference>
<dbReference type="GO" id="GO:0006274">
    <property type="term" value="P:DNA replication termination"/>
    <property type="evidence" value="ECO:0007669"/>
    <property type="project" value="UniProtKB-UniRule"/>
</dbReference>
<dbReference type="Gene3D" id="3.30.54.10">
    <property type="match status" value="1"/>
</dbReference>
<dbReference type="Gene3D" id="3.50.14.10">
    <property type="entry name" value="Replication terminator Tus, domain 1 superfamily/Replication terminator Tus"/>
    <property type="match status" value="1"/>
</dbReference>
<dbReference type="HAMAP" id="MF_00483">
    <property type="entry name" value="Rep_term_Tus"/>
    <property type="match status" value="1"/>
</dbReference>
<dbReference type="InterPro" id="IPR008865">
    <property type="entry name" value="DNA_replication_term_site-bd"/>
</dbReference>
<dbReference type="InterPro" id="IPR036381">
    <property type="entry name" value="Tus_dom1"/>
</dbReference>
<dbReference type="InterPro" id="IPR036384">
    <property type="entry name" value="Tus_sf"/>
</dbReference>
<dbReference type="NCBIfam" id="TIGR02648">
    <property type="entry name" value="rep_term_tus"/>
    <property type="match status" value="1"/>
</dbReference>
<dbReference type="Pfam" id="PF05472">
    <property type="entry name" value="Ter"/>
    <property type="match status" value="1"/>
</dbReference>
<dbReference type="SUPFAM" id="SSF56596">
    <property type="entry name" value="Replication terminator protein (Tus)"/>
    <property type="match status" value="1"/>
</dbReference>
<sequence length="309" mass="35311">MNKYDLIERLNNRFTALEAGLQALHQQLEDLPLLAARVFSLPEIEKGTEHQPIMHIPVNATVGAAARDLAIQHYQRLFIHHQGQNVSSKAALRLPGVLCFSVTESQLATCQKSIQHINQLKTELEHIITVESGLPSEQRFEFVHTHLHGLITLNTYRTITPLINPSSVRFGWANKHIIKNVTREDVLAQLNKSLNAGRAVPPFSREQWVELISQEINDVQRLPEQARLKIKRPVKVQPIARVWYQEQQKQVQHPCPMPLIAFCQLQSAAELPKLGELTDYDANQIKHKYKPDAKPLQLLVPRLHLYLEI</sequence>
<reference key="1">
    <citation type="journal article" date="2006" name="PLoS Genet.">
        <title>The complete genome sequence and comparative genome analysis of the high pathogenicity Yersinia enterocolitica strain 8081.</title>
        <authorList>
            <person name="Thomson N.R."/>
            <person name="Howard S."/>
            <person name="Wren B.W."/>
            <person name="Holden M.T.G."/>
            <person name="Crossman L."/>
            <person name="Challis G.L."/>
            <person name="Churcher C."/>
            <person name="Mungall K."/>
            <person name="Brooks K."/>
            <person name="Chillingworth T."/>
            <person name="Feltwell T."/>
            <person name="Abdellah Z."/>
            <person name="Hauser H."/>
            <person name="Jagels K."/>
            <person name="Maddison M."/>
            <person name="Moule S."/>
            <person name="Sanders M."/>
            <person name="Whitehead S."/>
            <person name="Quail M.A."/>
            <person name="Dougan G."/>
            <person name="Parkhill J."/>
            <person name="Prentice M.B."/>
        </authorList>
    </citation>
    <scope>NUCLEOTIDE SEQUENCE [LARGE SCALE GENOMIC DNA]</scope>
    <source>
        <strain>NCTC 13174 / 8081</strain>
    </source>
</reference>
<gene>
    <name evidence="1" type="primary">tus</name>
    <name type="ordered locus">YE2018</name>
</gene>
<feature type="chain" id="PRO_1000014335" description="DNA replication terminus site-binding protein">
    <location>
        <begin position="1"/>
        <end position="309"/>
    </location>
</feature>
<proteinExistence type="inferred from homology"/>
<name>TUS_YERE8</name>
<keyword id="KW-0963">Cytoplasm</keyword>
<keyword id="KW-0235">DNA replication</keyword>
<keyword id="KW-0238">DNA-binding</keyword>
<comment type="function">
    <text evidence="1">Trans-acting protein required for termination of DNA replication. Binds to DNA replication terminator sequences (terA to terF) to prevent the passage of replication forks. The termination efficiency will be affected by the affinity of this protein for the terminator sequence.</text>
</comment>
<comment type="subcellular location">
    <subcellularLocation>
        <location evidence="1">Cytoplasm</location>
    </subcellularLocation>
</comment>
<comment type="similarity">
    <text evidence="1">Belongs to the Tus family.</text>
</comment>
<protein>
    <recommendedName>
        <fullName evidence="1">DNA replication terminus site-binding protein</fullName>
        <shortName evidence="1">Ter-binding protein</shortName>
    </recommendedName>
</protein>
<evidence type="ECO:0000255" key="1">
    <source>
        <dbReference type="HAMAP-Rule" id="MF_00483"/>
    </source>
</evidence>
<organism>
    <name type="scientific">Yersinia enterocolitica serotype O:8 / biotype 1B (strain NCTC 13174 / 8081)</name>
    <dbReference type="NCBI Taxonomy" id="393305"/>
    <lineage>
        <taxon>Bacteria</taxon>
        <taxon>Pseudomonadati</taxon>
        <taxon>Pseudomonadota</taxon>
        <taxon>Gammaproteobacteria</taxon>
        <taxon>Enterobacterales</taxon>
        <taxon>Yersiniaceae</taxon>
        <taxon>Yersinia</taxon>
    </lineage>
</organism>
<accession>A1JML7</accession>